<organism>
    <name type="scientific">Sphingopyxis alaskensis (strain DSM 13593 / LMG 18877 / RB2256)</name>
    <name type="common">Sphingomonas alaskensis</name>
    <dbReference type="NCBI Taxonomy" id="317655"/>
    <lineage>
        <taxon>Bacteria</taxon>
        <taxon>Pseudomonadati</taxon>
        <taxon>Pseudomonadota</taxon>
        <taxon>Alphaproteobacteria</taxon>
        <taxon>Sphingomonadales</taxon>
        <taxon>Sphingomonadaceae</taxon>
        <taxon>Sphingopyxis</taxon>
    </lineage>
</organism>
<evidence type="ECO:0000255" key="1">
    <source>
        <dbReference type="HAMAP-Rule" id="MF_01371"/>
    </source>
</evidence>
<evidence type="ECO:0000305" key="2"/>
<dbReference type="EMBL" id="CP000356">
    <property type="protein sequence ID" value="ABF54505.1"/>
    <property type="molecule type" value="Genomic_DNA"/>
</dbReference>
<dbReference type="RefSeq" id="WP_011543070.1">
    <property type="nucleotide sequence ID" value="NC_008048.1"/>
</dbReference>
<dbReference type="SMR" id="Q1GPB7"/>
<dbReference type="STRING" id="317655.Sala_2800"/>
<dbReference type="KEGG" id="sal:Sala_2800"/>
<dbReference type="eggNOG" id="COG1841">
    <property type="taxonomic scope" value="Bacteria"/>
</dbReference>
<dbReference type="HOGENOM" id="CLU_131047_1_2_5"/>
<dbReference type="OrthoDB" id="9812790at2"/>
<dbReference type="Proteomes" id="UP000006578">
    <property type="component" value="Chromosome"/>
</dbReference>
<dbReference type="GO" id="GO:0022625">
    <property type="term" value="C:cytosolic large ribosomal subunit"/>
    <property type="evidence" value="ECO:0007669"/>
    <property type="project" value="TreeGrafter"/>
</dbReference>
<dbReference type="GO" id="GO:0003735">
    <property type="term" value="F:structural constituent of ribosome"/>
    <property type="evidence" value="ECO:0007669"/>
    <property type="project" value="InterPro"/>
</dbReference>
<dbReference type="GO" id="GO:0006412">
    <property type="term" value="P:translation"/>
    <property type="evidence" value="ECO:0007669"/>
    <property type="project" value="UniProtKB-UniRule"/>
</dbReference>
<dbReference type="CDD" id="cd01658">
    <property type="entry name" value="Ribosomal_L30"/>
    <property type="match status" value="1"/>
</dbReference>
<dbReference type="Gene3D" id="3.30.1390.20">
    <property type="entry name" value="Ribosomal protein L30, ferredoxin-like fold domain"/>
    <property type="match status" value="1"/>
</dbReference>
<dbReference type="HAMAP" id="MF_01371_B">
    <property type="entry name" value="Ribosomal_uL30_B"/>
    <property type="match status" value="1"/>
</dbReference>
<dbReference type="InterPro" id="IPR036919">
    <property type="entry name" value="Ribo_uL30_ferredoxin-like_sf"/>
</dbReference>
<dbReference type="InterPro" id="IPR005996">
    <property type="entry name" value="Ribosomal_uL30_bac-type"/>
</dbReference>
<dbReference type="InterPro" id="IPR016082">
    <property type="entry name" value="Ribosomal_uL30_ferredoxin-like"/>
</dbReference>
<dbReference type="NCBIfam" id="TIGR01308">
    <property type="entry name" value="rpmD_bact"/>
    <property type="match status" value="1"/>
</dbReference>
<dbReference type="PANTHER" id="PTHR15892:SF2">
    <property type="entry name" value="LARGE RIBOSOMAL SUBUNIT PROTEIN UL30M"/>
    <property type="match status" value="1"/>
</dbReference>
<dbReference type="PANTHER" id="PTHR15892">
    <property type="entry name" value="MITOCHONDRIAL RIBOSOMAL PROTEIN L30"/>
    <property type="match status" value="1"/>
</dbReference>
<dbReference type="Pfam" id="PF00327">
    <property type="entry name" value="Ribosomal_L30"/>
    <property type="match status" value="1"/>
</dbReference>
<dbReference type="PIRSF" id="PIRSF002211">
    <property type="entry name" value="Ribosomal_L30_bac-type"/>
    <property type="match status" value="1"/>
</dbReference>
<dbReference type="SUPFAM" id="SSF55129">
    <property type="entry name" value="Ribosomal protein L30p/L7e"/>
    <property type="match status" value="1"/>
</dbReference>
<comment type="subunit">
    <text evidence="1">Part of the 50S ribosomal subunit.</text>
</comment>
<comment type="similarity">
    <text evidence="1">Belongs to the universal ribosomal protein uL30 family.</text>
</comment>
<protein>
    <recommendedName>
        <fullName evidence="1">Large ribosomal subunit protein uL30</fullName>
    </recommendedName>
    <alternativeName>
        <fullName evidence="2">50S ribosomal protein L30</fullName>
    </alternativeName>
</protein>
<sequence>MADKKIKIRQIGSPIRRPKDQRKILTGLGLGKMHREVELVDTPEVRGMIRKLPHMVEVID</sequence>
<name>RL30_SPHAL</name>
<reference key="1">
    <citation type="journal article" date="2009" name="Proc. Natl. Acad. Sci. U.S.A.">
        <title>The genomic basis of trophic strategy in marine bacteria.</title>
        <authorList>
            <person name="Lauro F.M."/>
            <person name="McDougald D."/>
            <person name="Thomas T."/>
            <person name="Williams T.J."/>
            <person name="Egan S."/>
            <person name="Rice S."/>
            <person name="DeMaere M.Z."/>
            <person name="Ting L."/>
            <person name="Ertan H."/>
            <person name="Johnson J."/>
            <person name="Ferriera S."/>
            <person name="Lapidus A."/>
            <person name="Anderson I."/>
            <person name="Kyrpides N."/>
            <person name="Munk A.C."/>
            <person name="Detter C."/>
            <person name="Han C.S."/>
            <person name="Brown M.V."/>
            <person name="Robb F.T."/>
            <person name="Kjelleberg S."/>
            <person name="Cavicchioli R."/>
        </authorList>
    </citation>
    <scope>NUCLEOTIDE SEQUENCE [LARGE SCALE GENOMIC DNA]</scope>
    <source>
        <strain>DSM 13593 / LMG 18877 / RB2256</strain>
    </source>
</reference>
<keyword id="KW-1185">Reference proteome</keyword>
<keyword id="KW-0687">Ribonucleoprotein</keyword>
<keyword id="KW-0689">Ribosomal protein</keyword>
<gene>
    <name evidence="1" type="primary">rpmD</name>
    <name type="ordered locus">Sala_2800</name>
</gene>
<accession>Q1GPB7</accession>
<proteinExistence type="inferred from homology"/>
<feature type="chain" id="PRO_0000347146" description="Large ribosomal subunit protein uL30">
    <location>
        <begin position="1"/>
        <end position="60"/>
    </location>
</feature>